<reference key="1">
    <citation type="journal article" date="2019" name="Proc. Natl. Acad. Sci. U.S.A.">
        <title>Identification of key enzymes responsible for protolimonoid biosynthesis in plants: Opening the door to azadirachtin production.</title>
        <authorList>
            <person name="Hodgson H."/>
            <person name="De La Pena R."/>
            <person name="Stephenson M.J."/>
            <person name="Thimmappa R."/>
            <person name="Vincent J.L."/>
            <person name="Sattely E.S."/>
            <person name="Osbourn A."/>
        </authorList>
    </citation>
    <scope>NUCLEOTIDE SEQUENCE [MRNA]</scope>
    <scope>FUNCTION</scope>
    <scope>CATALYTIC ACTIVITY</scope>
    <scope>PATHWAY</scope>
    <scope>TISSUE SPECIFICITY</scope>
</reference>
<dbReference type="EC" id="1.14.14.-" evidence="4"/>
<dbReference type="EMBL" id="MK803264">
    <property type="protein sequence ID" value="QDZ36307.1"/>
    <property type="molecule type" value="mRNA"/>
</dbReference>
<dbReference type="SMR" id="A0A5B8NEF2"/>
<dbReference type="OrthoDB" id="2789670at2759"/>
<dbReference type="UniPathway" id="UPA00213"/>
<dbReference type="GO" id="GO:0016020">
    <property type="term" value="C:membrane"/>
    <property type="evidence" value="ECO:0007669"/>
    <property type="project" value="UniProtKB-SubCell"/>
</dbReference>
<dbReference type="GO" id="GO:0020037">
    <property type="term" value="F:heme binding"/>
    <property type="evidence" value="ECO:0007669"/>
    <property type="project" value="InterPro"/>
</dbReference>
<dbReference type="GO" id="GO:0005506">
    <property type="term" value="F:iron ion binding"/>
    <property type="evidence" value="ECO:0007669"/>
    <property type="project" value="InterPro"/>
</dbReference>
<dbReference type="GO" id="GO:0004497">
    <property type="term" value="F:monooxygenase activity"/>
    <property type="evidence" value="ECO:0007669"/>
    <property type="project" value="UniProtKB-KW"/>
</dbReference>
<dbReference type="GO" id="GO:0016705">
    <property type="term" value="F:oxidoreductase activity, acting on paired donors, with incorporation or reduction of molecular oxygen"/>
    <property type="evidence" value="ECO:0007669"/>
    <property type="project" value="InterPro"/>
</dbReference>
<dbReference type="CDD" id="cd11072">
    <property type="entry name" value="CYP71-like"/>
    <property type="match status" value="1"/>
</dbReference>
<dbReference type="FunFam" id="1.10.630.10:FF:000043">
    <property type="entry name" value="Cytochrome P450 99A2"/>
    <property type="match status" value="1"/>
</dbReference>
<dbReference type="Gene3D" id="1.10.630.10">
    <property type="entry name" value="Cytochrome P450"/>
    <property type="match status" value="1"/>
</dbReference>
<dbReference type="InterPro" id="IPR001128">
    <property type="entry name" value="Cyt_P450"/>
</dbReference>
<dbReference type="InterPro" id="IPR017972">
    <property type="entry name" value="Cyt_P450_CS"/>
</dbReference>
<dbReference type="InterPro" id="IPR002401">
    <property type="entry name" value="Cyt_P450_E_grp-I"/>
</dbReference>
<dbReference type="InterPro" id="IPR036396">
    <property type="entry name" value="Cyt_P450_sf"/>
</dbReference>
<dbReference type="PANTHER" id="PTHR47955:SF8">
    <property type="entry name" value="CYTOCHROME P450 71D11-LIKE"/>
    <property type="match status" value="1"/>
</dbReference>
<dbReference type="PANTHER" id="PTHR47955">
    <property type="entry name" value="CYTOCHROME P450 FAMILY 71 PROTEIN"/>
    <property type="match status" value="1"/>
</dbReference>
<dbReference type="Pfam" id="PF00067">
    <property type="entry name" value="p450"/>
    <property type="match status" value="1"/>
</dbReference>
<dbReference type="PRINTS" id="PR00463">
    <property type="entry name" value="EP450I"/>
</dbReference>
<dbReference type="PRINTS" id="PR00385">
    <property type="entry name" value="P450"/>
</dbReference>
<dbReference type="SUPFAM" id="SSF48264">
    <property type="entry name" value="Cytochrome P450"/>
    <property type="match status" value="1"/>
</dbReference>
<dbReference type="PROSITE" id="PS00086">
    <property type="entry name" value="CYTOCHROME_P450"/>
    <property type="match status" value="1"/>
</dbReference>
<sequence length="501" mass="57160">MEFRLPVLLSFLLFFLMLVRHWKRSKGQGKPPPGPKPLPILGNLHQLADGLPHYAVTKLCRKYGPVMKLKLGQLDAVVISSPEAAKEVLKTNEIKFAQRPEVYAVEIMSYDHSSIVFSPYGDYWREMRKISVLELLSNRRVTSFRSIREDEVWNLVQFISENEGCIVNLSERIFIMTNDIVSRAAFGNKCDDQHNFTALLEEILQIGAGFAIADLYPSLTFLRPLTGMKPALERIHKKMDKILEQIVTEHQIKRKAAAKNNTKFEEEDLVDTLLNYAEANKNEFHLTTDQVKAVTLDIFSAGSETSATSMEWAMSELLKNPRVMKKAQEEVRQACKGKSKIKETDIQNLEYLKLVIKETFRLHAPGPFTPREARETCEIGGYTIPAKAKILINLHAMGRDPTIWKDPECFRPERFEGSSIDFKGNHFELIPFGGGRRICPGISFATANIELGLAQMMYHFDYKLPNGKSLEDLDMNENFGMTCRRKENLQVIATTRIPFQK</sequence>
<proteinExistence type="evidence at protein level"/>
<comment type="function">
    <text evidence="3">Monooxygenase involved in the biosynthesis of limonoids triterpene natural products such as azadirachtin, an antifeedant widely used as bioinsecticide, and possessing many medicinal applications including anti-tumoral, anti-malarial, anti-rheumatic, antibacterial, anti-inflammatory, anti-pyretic and diuretic effects (PubMed:31371503). Catalyzes the conversion of dihydroniloticin to the protolimonoid melianol (PubMed:31371503).</text>
</comment>
<comment type="catalytic activity">
    <reaction evidence="3">
        <text>dihydroniloticin + 2 reduced [NADPH--hemoprotein reductase] + 2 O2 = melianol + 2 oxidized [NADPH--hemoprotein reductase] + 3 H2O + 2 H(+)</text>
        <dbReference type="Rhea" id="RHEA:80283"/>
        <dbReference type="Rhea" id="RHEA-COMP:11964"/>
        <dbReference type="Rhea" id="RHEA-COMP:11965"/>
        <dbReference type="ChEBI" id="CHEBI:15377"/>
        <dbReference type="ChEBI" id="CHEBI:15378"/>
        <dbReference type="ChEBI" id="CHEBI:15379"/>
        <dbReference type="ChEBI" id="CHEBI:57618"/>
        <dbReference type="ChEBI" id="CHEBI:58210"/>
        <dbReference type="ChEBI" id="CHEBI:231450"/>
        <dbReference type="ChEBI" id="CHEBI:231451"/>
    </reaction>
    <physiologicalReaction direction="left-to-right" evidence="3">
        <dbReference type="Rhea" id="RHEA:80284"/>
    </physiologicalReaction>
</comment>
<comment type="cofactor">
    <cofactor evidence="1">
        <name>heme</name>
        <dbReference type="ChEBI" id="CHEBI:30413"/>
    </cofactor>
</comment>
<comment type="pathway">
    <text evidence="3">Secondary metabolite biosynthesis; terpenoid biosynthesis.</text>
</comment>
<comment type="subcellular location">
    <subcellularLocation>
        <location evidence="2">Membrane</location>
        <topology evidence="2">Single-pass membrane protein</topology>
    </subcellularLocation>
</comment>
<comment type="tissue specificity">
    <text evidence="3">Mainly expressed in petioles and roots, and, to a lower extent, in leaves.</text>
</comment>
<comment type="similarity">
    <text evidence="5">Belongs to the cytochrome P450 family.</text>
</comment>
<keyword id="KW-0349">Heme</keyword>
<keyword id="KW-0408">Iron</keyword>
<keyword id="KW-0472">Membrane</keyword>
<keyword id="KW-0479">Metal-binding</keyword>
<keyword id="KW-0503">Monooxygenase</keyword>
<keyword id="KW-0560">Oxidoreductase</keyword>
<keyword id="KW-0812">Transmembrane</keyword>
<keyword id="KW-1133">Transmembrane helix</keyword>
<evidence type="ECO:0000250" key="1">
    <source>
        <dbReference type="UniProtKB" id="Q96242"/>
    </source>
</evidence>
<evidence type="ECO:0000255" key="2"/>
<evidence type="ECO:0000269" key="3">
    <source>
    </source>
</evidence>
<evidence type="ECO:0000303" key="4">
    <source>
    </source>
</evidence>
<evidence type="ECO:0000305" key="5"/>
<gene>
    <name evidence="4" type="primary">CYP71BQ5</name>
</gene>
<feature type="chain" id="PRO_5022684285" description="Melianol synthase CYP71BQ5">
    <location>
        <begin position="1"/>
        <end position="501"/>
    </location>
</feature>
<feature type="transmembrane region" description="Helical" evidence="2">
    <location>
        <begin position="1"/>
        <end position="21"/>
    </location>
</feature>
<feature type="binding site" description="axial binding residue" evidence="1">
    <location>
        <position position="439"/>
    </location>
    <ligand>
        <name>heme</name>
        <dbReference type="ChEBI" id="CHEBI:30413"/>
    </ligand>
    <ligandPart>
        <name>Fe</name>
        <dbReference type="ChEBI" id="CHEBI:18248"/>
    </ligandPart>
</feature>
<protein>
    <recommendedName>
        <fullName evidence="4">Melianol synthase CYP71BQ5</fullName>
        <ecNumber evidence="4">1.14.14.-</ecNumber>
    </recommendedName>
    <alternativeName>
        <fullName evidence="4">Cytochrome P450 family 71 subfamily BQ polypeptide 5</fullName>
        <shortName evidence="4">MaCYP71BQ5</shortName>
    </alternativeName>
</protein>
<accession>A0A5B8NEF2</accession>
<organism>
    <name type="scientific">Melia azedarach</name>
    <name type="common">Chinaberry tree</name>
    <dbReference type="NCBI Taxonomy" id="155640"/>
    <lineage>
        <taxon>Eukaryota</taxon>
        <taxon>Viridiplantae</taxon>
        <taxon>Streptophyta</taxon>
        <taxon>Embryophyta</taxon>
        <taxon>Tracheophyta</taxon>
        <taxon>Spermatophyta</taxon>
        <taxon>Magnoliopsida</taxon>
        <taxon>eudicotyledons</taxon>
        <taxon>Gunneridae</taxon>
        <taxon>Pentapetalae</taxon>
        <taxon>rosids</taxon>
        <taxon>malvids</taxon>
        <taxon>Sapindales</taxon>
        <taxon>Meliaceae</taxon>
        <taxon>Melia</taxon>
    </lineage>
</organism>
<name>C1BQ5_MELAZ</name>